<name>KIF15_MOUSE</name>
<accession>Q6P9L6</accession>
<accession>O35065</accession>
<accession>Q70MX5</accession>
<feature type="chain" id="PRO_0000328685" description="Kinesin-like protein KIF15">
    <location>
        <begin position="1"/>
        <end position="1387"/>
    </location>
</feature>
<feature type="domain" description="Kinesin motor" evidence="4">
    <location>
        <begin position="26"/>
        <end position="363"/>
    </location>
</feature>
<feature type="region of interest" description="Disordered" evidence="5">
    <location>
        <begin position="1"/>
        <end position="23"/>
    </location>
</feature>
<feature type="coiled-coil region" evidence="3">
    <location>
        <begin position="368"/>
        <end position="1132"/>
    </location>
</feature>
<feature type="compositionally biased region" description="Polar residues" evidence="5">
    <location>
        <begin position="10"/>
        <end position="22"/>
    </location>
</feature>
<feature type="binding site" evidence="4">
    <location>
        <begin position="109"/>
        <end position="116"/>
    </location>
    <ligand>
        <name>ATP</name>
        <dbReference type="ChEBI" id="CHEBI:30616"/>
    </ligand>
</feature>
<feature type="modified residue" description="Phosphoserine" evidence="2">
    <location>
        <position position="568"/>
    </location>
</feature>
<feature type="modified residue" description="N6-acetyllysine" evidence="2">
    <location>
        <position position="1009"/>
    </location>
</feature>
<feature type="modified residue" description="Phosphoserine" evidence="2">
    <location>
        <position position="1141"/>
    </location>
</feature>
<feature type="modified residue" description="Phosphoserine" evidence="2">
    <location>
        <position position="1169"/>
    </location>
</feature>
<feature type="sequence conflict" description="In Ref. 1; CAD90258." evidence="8" ref="1">
    <original>D</original>
    <variation>G</variation>
    <location>
        <position position="126"/>
    </location>
</feature>
<feature type="sequence conflict" description="In Ref. 1; CAD90258." evidence="8" ref="1">
    <original>S</original>
    <variation>N</variation>
    <location>
        <position position="159"/>
    </location>
</feature>
<organism>
    <name type="scientific">Mus musculus</name>
    <name type="common">Mouse</name>
    <dbReference type="NCBI Taxonomy" id="10090"/>
    <lineage>
        <taxon>Eukaryota</taxon>
        <taxon>Metazoa</taxon>
        <taxon>Chordata</taxon>
        <taxon>Craniata</taxon>
        <taxon>Vertebrata</taxon>
        <taxon>Euteleostomi</taxon>
        <taxon>Mammalia</taxon>
        <taxon>Eutheria</taxon>
        <taxon>Euarchontoglires</taxon>
        <taxon>Glires</taxon>
        <taxon>Rodentia</taxon>
        <taxon>Myomorpha</taxon>
        <taxon>Muroidea</taxon>
        <taxon>Muridae</taxon>
        <taxon>Murinae</taxon>
        <taxon>Mus</taxon>
        <taxon>Mus</taxon>
    </lineage>
</organism>
<dbReference type="EMBL" id="AJ560623">
    <property type="protein sequence ID" value="CAD90258.1"/>
    <property type="molecule type" value="mRNA"/>
</dbReference>
<dbReference type="EMBL" id="BC060710">
    <property type="protein sequence ID" value="AAH60710.1"/>
    <property type="molecule type" value="mRNA"/>
</dbReference>
<dbReference type="EMBL" id="AB001432">
    <property type="protein sequence ID" value="BAA22392.1"/>
    <property type="molecule type" value="mRNA"/>
</dbReference>
<dbReference type="CCDS" id="CCDS23651.1"/>
<dbReference type="RefSeq" id="NP_034750.1">
    <property type="nucleotide sequence ID" value="NM_010620.1"/>
</dbReference>
<dbReference type="SMR" id="Q6P9L6"/>
<dbReference type="BioGRID" id="229105">
    <property type="interactions" value="9"/>
</dbReference>
<dbReference type="FunCoup" id="Q6P9L6">
    <property type="interactions" value="388"/>
</dbReference>
<dbReference type="IntAct" id="Q6P9L6">
    <property type="interactions" value="8"/>
</dbReference>
<dbReference type="MINT" id="Q6P9L6"/>
<dbReference type="STRING" id="10090.ENSMUSP00000035490"/>
<dbReference type="GlyGen" id="Q6P9L6">
    <property type="glycosylation" value="1 site, 1 O-linked glycan (1 site)"/>
</dbReference>
<dbReference type="iPTMnet" id="Q6P9L6"/>
<dbReference type="PhosphoSitePlus" id="Q6P9L6"/>
<dbReference type="SwissPalm" id="Q6P9L6"/>
<dbReference type="PaxDb" id="10090-ENSMUSP00000035490"/>
<dbReference type="PeptideAtlas" id="Q6P9L6"/>
<dbReference type="ProteomicsDB" id="269300"/>
<dbReference type="Pumba" id="Q6P9L6"/>
<dbReference type="Antibodypedia" id="29484">
    <property type="antibodies" value="197 antibodies from 25 providers"/>
</dbReference>
<dbReference type="DNASU" id="209737"/>
<dbReference type="Ensembl" id="ENSMUST00000040717.7">
    <property type="protein sequence ID" value="ENSMUSP00000035490.6"/>
    <property type="gene ID" value="ENSMUSG00000036768.7"/>
</dbReference>
<dbReference type="GeneID" id="209737"/>
<dbReference type="KEGG" id="mmu:209737"/>
<dbReference type="UCSC" id="uc009sfl.1">
    <property type="organism name" value="mouse"/>
</dbReference>
<dbReference type="AGR" id="MGI:1098258"/>
<dbReference type="CTD" id="56992"/>
<dbReference type="MGI" id="MGI:1098258">
    <property type="gene designation" value="Kif15"/>
</dbReference>
<dbReference type="VEuPathDB" id="HostDB:ENSMUSG00000036768"/>
<dbReference type="eggNOG" id="KOG4280">
    <property type="taxonomic scope" value="Eukaryota"/>
</dbReference>
<dbReference type="GeneTree" id="ENSGT00940000156463"/>
<dbReference type="HOGENOM" id="CLU_005295_0_0_1"/>
<dbReference type="InParanoid" id="Q6P9L6"/>
<dbReference type="OMA" id="CVKKEKF"/>
<dbReference type="OrthoDB" id="3176171at2759"/>
<dbReference type="PhylomeDB" id="Q6P9L6"/>
<dbReference type="TreeFam" id="TF320478"/>
<dbReference type="Reactome" id="R-MMU-2132295">
    <property type="pathway name" value="MHC class II antigen presentation"/>
</dbReference>
<dbReference type="Reactome" id="R-MMU-6811434">
    <property type="pathway name" value="COPI-dependent Golgi-to-ER retrograde traffic"/>
</dbReference>
<dbReference type="Reactome" id="R-MMU-983189">
    <property type="pathway name" value="Kinesins"/>
</dbReference>
<dbReference type="BioGRID-ORCS" id="209737">
    <property type="hits" value="3 hits in 80 CRISPR screens"/>
</dbReference>
<dbReference type="ChiTaRS" id="Kif15">
    <property type="organism name" value="mouse"/>
</dbReference>
<dbReference type="PRO" id="PR:Q6P9L6"/>
<dbReference type="Proteomes" id="UP000000589">
    <property type="component" value="Chromosome 9"/>
</dbReference>
<dbReference type="RNAct" id="Q6P9L6">
    <property type="molecule type" value="protein"/>
</dbReference>
<dbReference type="Bgee" id="ENSMUSG00000036768">
    <property type="expression patterns" value="Expressed in embryonic post-anal tail and 127 other cell types or tissues"/>
</dbReference>
<dbReference type="ExpressionAtlas" id="Q6P9L6">
    <property type="expression patterns" value="baseline and differential"/>
</dbReference>
<dbReference type="GO" id="GO:0005737">
    <property type="term" value="C:cytoplasm"/>
    <property type="evidence" value="ECO:0007669"/>
    <property type="project" value="UniProtKB-SubCell"/>
</dbReference>
<dbReference type="GO" id="GO:0005874">
    <property type="term" value="C:microtubule"/>
    <property type="evidence" value="ECO:0007669"/>
    <property type="project" value="UniProtKB-KW"/>
</dbReference>
<dbReference type="GO" id="GO:0000922">
    <property type="term" value="C:spindle pole"/>
    <property type="evidence" value="ECO:0000250"/>
    <property type="project" value="UniProtKB"/>
</dbReference>
<dbReference type="GO" id="GO:0005524">
    <property type="term" value="F:ATP binding"/>
    <property type="evidence" value="ECO:0007669"/>
    <property type="project" value="UniProtKB-KW"/>
</dbReference>
<dbReference type="GO" id="GO:0008017">
    <property type="term" value="F:microtubule binding"/>
    <property type="evidence" value="ECO:0007669"/>
    <property type="project" value="InterPro"/>
</dbReference>
<dbReference type="GO" id="GO:0008574">
    <property type="term" value="F:plus-end-directed microtubule motor activity"/>
    <property type="evidence" value="ECO:0000250"/>
    <property type="project" value="UniProtKB"/>
</dbReference>
<dbReference type="GO" id="GO:0051299">
    <property type="term" value="P:centrosome separation"/>
    <property type="evidence" value="ECO:0000250"/>
    <property type="project" value="UniProtKB"/>
</dbReference>
<dbReference type="GO" id="GO:0007018">
    <property type="term" value="P:microtubule-based movement"/>
    <property type="evidence" value="ECO:0007669"/>
    <property type="project" value="InterPro"/>
</dbReference>
<dbReference type="GO" id="GO:0090307">
    <property type="term" value="P:mitotic spindle assembly"/>
    <property type="evidence" value="ECO:0000250"/>
    <property type="project" value="UniProtKB"/>
</dbReference>
<dbReference type="CDD" id="cd01373">
    <property type="entry name" value="KISc_KLP2_like"/>
    <property type="match status" value="1"/>
</dbReference>
<dbReference type="FunFam" id="3.40.850.10:FF:000034">
    <property type="entry name" value="Kinesin family member 15"/>
    <property type="match status" value="1"/>
</dbReference>
<dbReference type="Gene3D" id="3.40.850.10">
    <property type="entry name" value="Kinesin motor domain"/>
    <property type="match status" value="1"/>
</dbReference>
<dbReference type="InterPro" id="IPR031794">
    <property type="entry name" value="HMMR_C"/>
</dbReference>
<dbReference type="InterPro" id="IPR044986">
    <property type="entry name" value="KIF15/KIN-12"/>
</dbReference>
<dbReference type="InterPro" id="IPR001752">
    <property type="entry name" value="Kinesin_motor_dom"/>
</dbReference>
<dbReference type="InterPro" id="IPR036961">
    <property type="entry name" value="Kinesin_motor_dom_sf"/>
</dbReference>
<dbReference type="InterPro" id="IPR027417">
    <property type="entry name" value="P-loop_NTPase"/>
</dbReference>
<dbReference type="PANTHER" id="PTHR37739">
    <property type="entry name" value="KINESIN-LIKE PROTEIN KIN-12D"/>
    <property type="match status" value="1"/>
</dbReference>
<dbReference type="PANTHER" id="PTHR37739:SF8">
    <property type="entry name" value="KINESIN-LIKE PROTEIN KIN-12D"/>
    <property type="match status" value="1"/>
</dbReference>
<dbReference type="Pfam" id="PF15908">
    <property type="entry name" value="HMMR_C"/>
    <property type="match status" value="1"/>
</dbReference>
<dbReference type="Pfam" id="PF00225">
    <property type="entry name" value="Kinesin"/>
    <property type="match status" value="1"/>
</dbReference>
<dbReference type="PRINTS" id="PR00380">
    <property type="entry name" value="KINESINHEAVY"/>
</dbReference>
<dbReference type="SMART" id="SM00129">
    <property type="entry name" value="KISc"/>
    <property type="match status" value="1"/>
</dbReference>
<dbReference type="SUPFAM" id="SSF52540">
    <property type="entry name" value="P-loop containing nucleoside triphosphate hydrolases"/>
    <property type="match status" value="1"/>
</dbReference>
<dbReference type="PROSITE" id="PS50067">
    <property type="entry name" value="KINESIN_MOTOR_2"/>
    <property type="match status" value="1"/>
</dbReference>
<evidence type="ECO:0000250" key="1"/>
<evidence type="ECO:0000250" key="2">
    <source>
        <dbReference type="UniProtKB" id="Q9NS87"/>
    </source>
</evidence>
<evidence type="ECO:0000255" key="3"/>
<evidence type="ECO:0000255" key="4">
    <source>
        <dbReference type="PROSITE-ProRule" id="PRU00283"/>
    </source>
</evidence>
<evidence type="ECO:0000256" key="5">
    <source>
        <dbReference type="SAM" id="MobiDB-lite"/>
    </source>
</evidence>
<evidence type="ECO:0000269" key="6">
    <source>
    </source>
</evidence>
<evidence type="ECO:0000269" key="7">
    <source>
    </source>
</evidence>
<evidence type="ECO:0000305" key="8"/>
<comment type="function">
    <text evidence="1">Plus-end directed kinesin-like motor enzyme involved in mitotic spindle assembly.</text>
</comment>
<comment type="subunit">
    <text evidence="1">Interacts with MKI67 and TPX2.</text>
</comment>
<comment type="subcellular location">
    <subcellularLocation>
        <location evidence="1">Cytoplasm</location>
    </subcellularLocation>
    <subcellularLocation>
        <location evidence="1">Cytoplasm</location>
        <location evidence="1">Cytoskeleton</location>
        <location evidence="1">Spindle</location>
    </subcellularLocation>
    <text evidence="1">Detected during the interphase in the cytoplasm as finely punctuate pattern and irregularly shaped dots. Localizes at the spindle poles and microtubules prior to anaphase. Localizes at the central spindle at anaphase. Localizes at the sites of invaginating cell membranes, a position that corresponds to the location of the contractile actomyosin ring of dividing cells. Colocalizes with actin in interphase. Colocalizes in dendrites and in growth cone of axons with microtubules. Colocalizes with TPX2 in mitosis (By similarity).</text>
</comment>
<comment type="tissue specificity">
    <text evidence="6 7">Expressed in brain (neurons in the external germinal layer of the cerebellum and in ventricular zones) (at protein level). Expressed in spleen and testis.</text>
</comment>
<comment type="similarity">
    <text evidence="4">Belongs to the TRAFAC class myosin-kinesin ATPase superfamily. Kinesin family. KLP2 subfamily.</text>
</comment>
<sequence>MAPGCKSELRNVTNSHSNQPSNEGDAIKVFVRIRPAEEGARSADGEQSFCLSVLSQTTLRLHSNPDPKTFVFDYVAGMDTTQESVFSTVAKSIVESCMSGYNGTIFAYGQTGSGKTFTMMGPSDSDNFSHNLRGIIPRSFEYLFSLIDREKEKAGAGKSFLCKCSFIEVYNEQIYDLLDSASVGLYLREHIKKGVFVVGAVEQAVTSAAETYQVLSRGWRNRRVASTSMNRESSRSHAVFTITIESMEKSSETVNIRTSLLNLVDLAGSERQKDTHAEGMRLKEAGNINRSLSCLGQVITALVDVGNGKQRHICYRDSKLTFLLRDSLGGNAKTAIIANVHPGSRCFGETLSTLNFAQRAKLIKNKAVVNEDTQGNVSQLQAEVKRLKEQLSQFTSGQITPESLLARDKEKTNYIEYFLEAMLFFKKSEQEKKSLIEKITQLEDLTLKKEKFIQSNKMIVKFREDQIMRLERLHKEGRGSFLPEEQDRLLSELRDEVQTLREHVEHHPRLAKYAMENHSLREENRRLKLLAPVKRAHEIDAQSIARLEKAFAEVSSTETNDKGLQGFSPKALKESSFFTNTEKLKAQLLQIQTELNNSKQEYEEFKELTRKKQLELESELQSLQKANLNLENLLEATKVCKRQEVSQLNKLHAETLKIITTPTKAYQLCSRLVPKSSPEVGSFGFLCTESSSRLDNDILNEPVPPEMSEQALEAVSEELRTVQEQLSVLQVKLDEEERKNLKLQQNVDKLEHHSTQMQELFSSERSDWTKQQQEHVTQLSDLEKQLQDAQTKNEFLKCEVHDLRIVLNSADKELSLVKLEYSTFKENHEKELSQLSERHVQVQLQLDNARLENEKLLESQACLQDSYDNLQEVMKFEIDQLSKNLQNCKQENETLKSDLHNLVELFEAEKERNNKLSLQFEEDKENSSKEILKVLETVRQEKQKEMAKCEKQMAKIQKLEESLLATENVISSLEKSRESDKELVTNLMNQIQELRISIGEKSETIATLKQELQDINCKYNASLADKEESKELIRRQEVDILELKETLRLRILSEDIERDMLCEDLAHATEQLNMLTEASKKHSGLLQSAQEELTRKEALIQELQHKLNQEKEEVEQKKNEFSLKMRQLEHVMGSATEYPQSPKTPPHFQAHLAKLLETQEQEIEDGRASKTSLQHLVTKLNEDREVKNAEILRMKDQLCEMENLRLESQQLREKNWLLQRQLDDVKRQQESGDQSHPDSQQLKNEHEEIIKERLAKNKLIEEMLKMKTNLEEVQSALHSKEKACHRMSEEIERTRTLESRAFQEKEQLRSKLEEMYEERERTFLEMEMLKKQLEFLAEENGKLVGHQNLHQKIQYVVRLKKENIRLTEETEKLRAENLFLKEKKKEF</sequence>
<keyword id="KW-0007">Acetylation</keyword>
<keyword id="KW-0067">ATP-binding</keyword>
<keyword id="KW-0175">Coiled coil</keyword>
<keyword id="KW-0963">Cytoplasm</keyword>
<keyword id="KW-0206">Cytoskeleton</keyword>
<keyword id="KW-0493">Microtubule</keyword>
<keyword id="KW-0505">Motor protein</keyword>
<keyword id="KW-0547">Nucleotide-binding</keyword>
<keyword id="KW-0597">Phosphoprotein</keyword>
<keyword id="KW-1185">Reference proteome</keyword>
<protein>
    <recommendedName>
        <fullName>Kinesin-like protein KIF15</fullName>
    </recommendedName>
    <alternativeName>
        <fullName>Kinesin-like protein 2</fullName>
    </alternativeName>
    <alternativeName>
        <fullName>Kinesin-like protein 7</fullName>
    </alternativeName>
</protein>
<proteinExistence type="evidence at protein level"/>
<reference key="1">
    <citation type="journal article" date="2003" name="J. Neurocytol.">
        <title>Expression of the mitotic kinesin Kif15 in postmitotic neurons: implications for neuronal migration and development.</title>
        <authorList>
            <person name="Buster D.W."/>
            <person name="Baird D.H."/>
            <person name="Yu W."/>
            <person name="Solowska J.M."/>
            <person name="Chauviere M."/>
            <person name="Mazurek A."/>
            <person name="Kress M."/>
            <person name="Baas P.W."/>
        </authorList>
    </citation>
    <scope>NUCLEOTIDE SEQUENCE [MRNA]</scope>
    <scope>TISSUE SPECIFICITY</scope>
    <source>
        <strain>BALB/cJ</strain>
        <tissue>Embryo</tissue>
    </source>
</reference>
<reference key="2">
    <citation type="journal article" date="2004" name="Genome Res.">
        <title>The status, quality, and expansion of the NIH full-length cDNA project: the Mammalian Gene Collection (MGC).</title>
        <authorList>
            <consortium name="The MGC Project Team"/>
        </authorList>
    </citation>
    <scope>NUCLEOTIDE SEQUENCE [LARGE SCALE MRNA]</scope>
    <source>
        <strain>C57BL/6J</strain>
        <tissue>Brain</tissue>
    </source>
</reference>
<reference key="3">
    <citation type="journal article" date="1997" name="Proc. Natl. Acad. Sci. U.S.A.">
        <title>Identification and classification of 16 new kinesin superfamily (KIF) proteins in mouse genome.</title>
        <authorList>
            <person name="Nakagawa T."/>
            <person name="Tanaka Y."/>
            <person name="Matsuoka E."/>
            <person name="Kondo S."/>
            <person name="Okada Y."/>
            <person name="Noda Y."/>
            <person name="Kanai Y."/>
            <person name="Hirokawa N."/>
        </authorList>
    </citation>
    <scope>NUCLEOTIDE SEQUENCE [MRNA] OF 105-270</scope>
    <scope>TISSUE SPECIFICITY</scope>
    <source>
        <strain>ICR</strain>
    </source>
</reference>
<reference key="4">
    <citation type="journal article" date="2010" name="Cell">
        <title>A tissue-specific atlas of mouse protein phosphorylation and expression.</title>
        <authorList>
            <person name="Huttlin E.L."/>
            <person name="Jedrychowski M.P."/>
            <person name="Elias J.E."/>
            <person name="Goswami T."/>
            <person name="Rad R."/>
            <person name="Beausoleil S.A."/>
            <person name="Villen J."/>
            <person name="Haas W."/>
            <person name="Sowa M.E."/>
            <person name="Gygi S.P."/>
        </authorList>
    </citation>
    <scope>IDENTIFICATION BY MASS SPECTROMETRY [LARGE SCALE ANALYSIS]</scope>
    <source>
        <tissue>Spleen</tissue>
        <tissue>Testis</tissue>
    </source>
</reference>
<gene>
    <name type="primary">Kif15</name>
    <name type="synonym">Klp2</name>
    <name type="synonym">Knsl7</name>
</gene>